<protein>
    <recommendedName>
        <fullName evidence="1">DNA ligase</fullName>
        <ecNumber evidence="1">6.5.1.2</ecNumber>
    </recommendedName>
    <alternativeName>
        <fullName evidence="1">Polydeoxyribonucleotide synthase [NAD(+)]</fullName>
    </alternativeName>
</protein>
<keyword id="KW-0227">DNA damage</keyword>
<keyword id="KW-0234">DNA repair</keyword>
<keyword id="KW-0235">DNA replication</keyword>
<keyword id="KW-0436">Ligase</keyword>
<keyword id="KW-0460">Magnesium</keyword>
<keyword id="KW-0464">Manganese</keyword>
<keyword id="KW-0479">Metal-binding</keyword>
<keyword id="KW-0520">NAD</keyword>
<keyword id="KW-1185">Reference proteome</keyword>
<keyword id="KW-0862">Zinc</keyword>
<proteinExistence type="inferred from homology"/>
<evidence type="ECO:0000255" key="1">
    <source>
        <dbReference type="HAMAP-Rule" id="MF_01588"/>
    </source>
</evidence>
<dbReference type="EC" id="6.5.1.2" evidence="1"/>
<dbReference type="EMBL" id="CP000095">
    <property type="protein sequence ID" value="AAZ58769.1"/>
    <property type="molecule type" value="Genomic_DNA"/>
</dbReference>
<dbReference type="RefSeq" id="WP_011295623.1">
    <property type="nucleotide sequence ID" value="NC_007335.2"/>
</dbReference>
<dbReference type="SMR" id="Q46IA9"/>
<dbReference type="STRING" id="59920.PMN2A_1279"/>
<dbReference type="KEGG" id="pmn:PMN2A_1279"/>
<dbReference type="HOGENOM" id="CLU_007764_2_1_3"/>
<dbReference type="OrthoDB" id="9759736at2"/>
<dbReference type="PhylomeDB" id="Q46IA9"/>
<dbReference type="Proteomes" id="UP000002535">
    <property type="component" value="Chromosome"/>
</dbReference>
<dbReference type="GO" id="GO:0005829">
    <property type="term" value="C:cytosol"/>
    <property type="evidence" value="ECO:0007669"/>
    <property type="project" value="TreeGrafter"/>
</dbReference>
<dbReference type="GO" id="GO:0003677">
    <property type="term" value="F:DNA binding"/>
    <property type="evidence" value="ECO:0007669"/>
    <property type="project" value="InterPro"/>
</dbReference>
<dbReference type="GO" id="GO:0003911">
    <property type="term" value="F:DNA ligase (NAD+) activity"/>
    <property type="evidence" value="ECO:0007669"/>
    <property type="project" value="UniProtKB-UniRule"/>
</dbReference>
<dbReference type="GO" id="GO:0046872">
    <property type="term" value="F:metal ion binding"/>
    <property type="evidence" value="ECO:0007669"/>
    <property type="project" value="UniProtKB-KW"/>
</dbReference>
<dbReference type="GO" id="GO:0006281">
    <property type="term" value="P:DNA repair"/>
    <property type="evidence" value="ECO:0007669"/>
    <property type="project" value="UniProtKB-KW"/>
</dbReference>
<dbReference type="GO" id="GO:0006260">
    <property type="term" value="P:DNA replication"/>
    <property type="evidence" value="ECO:0007669"/>
    <property type="project" value="UniProtKB-KW"/>
</dbReference>
<dbReference type="CDD" id="cd17748">
    <property type="entry name" value="BRCT_DNA_ligase_like"/>
    <property type="match status" value="1"/>
</dbReference>
<dbReference type="CDD" id="cd00114">
    <property type="entry name" value="LIGANc"/>
    <property type="match status" value="1"/>
</dbReference>
<dbReference type="FunFam" id="1.10.150.20:FF:000007">
    <property type="entry name" value="DNA ligase"/>
    <property type="match status" value="1"/>
</dbReference>
<dbReference type="FunFam" id="3.30.470.30:FF:000001">
    <property type="entry name" value="DNA ligase"/>
    <property type="match status" value="1"/>
</dbReference>
<dbReference type="Gene3D" id="6.20.10.30">
    <property type="match status" value="1"/>
</dbReference>
<dbReference type="Gene3D" id="1.10.150.20">
    <property type="entry name" value="5' to 3' exonuclease, C-terminal subdomain"/>
    <property type="match status" value="2"/>
</dbReference>
<dbReference type="Gene3D" id="3.40.50.10190">
    <property type="entry name" value="BRCT domain"/>
    <property type="match status" value="1"/>
</dbReference>
<dbReference type="Gene3D" id="3.30.470.30">
    <property type="entry name" value="DNA ligase/mRNA capping enzyme"/>
    <property type="match status" value="1"/>
</dbReference>
<dbReference type="Gene3D" id="1.10.287.610">
    <property type="entry name" value="Helix hairpin bin"/>
    <property type="match status" value="1"/>
</dbReference>
<dbReference type="Gene3D" id="2.40.50.140">
    <property type="entry name" value="Nucleic acid-binding proteins"/>
    <property type="match status" value="1"/>
</dbReference>
<dbReference type="HAMAP" id="MF_01588">
    <property type="entry name" value="DNA_ligase_A"/>
    <property type="match status" value="1"/>
</dbReference>
<dbReference type="InterPro" id="IPR001357">
    <property type="entry name" value="BRCT_dom"/>
</dbReference>
<dbReference type="InterPro" id="IPR036420">
    <property type="entry name" value="BRCT_dom_sf"/>
</dbReference>
<dbReference type="InterPro" id="IPR041663">
    <property type="entry name" value="DisA/LigA_HHH"/>
</dbReference>
<dbReference type="InterPro" id="IPR001679">
    <property type="entry name" value="DNA_ligase"/>
</dbReference>
<dbReference type="InterPro" id="IPR033136">
    <property type="entry name" value="DNA_ligase_CS"/>
</dbReference>
<dbReference type="InterPro" id="IPR013839">
    <property type="entry name" value="DNAligase_adenylation"/>
</dbReference>
<dbReference type="InterPro" id="IPR013840">
    <property type="entry name" value="DNAligase_N"/>
</dbReference>
<dbReference type="InterPro" id="IPR003583">
    <property type="entry name" value="Hlx-hairpin-Hlx_DNA-bd_motif"/>
</dbReference>
<dbReference type="InterPro" id="IPR012340">
    <property type="entry name" value="NA-bd_OB-fold"/>
</dbReference>
<dbReference type="InterPro" id="IPR004150">
    <property type="entry name" value="NAD_DNA_ligase_OB"/>
</dbReference>
<dbReference type="InterPro" id="IPR010994">
    <property type="entry name" value="RuvA_2-like"/>
</dbReference>
<dbReference type="InterPro" id="IPR004149">
    <property type="entry name" value="Znf_DNAligase_C4"/>
</dbReference>
<dbReference type="NCBIfam" id="TIGR00575">
    <property type="entry name" value="dnlj"/>
    <property type="match status" value="1"/>
</dbReference>
<dbReference type="NCBIfam" id="NF005932">
    <property type="entry name" value="PRK07956.1"/>
    <property type="match status" value="1"/>
</dbReference>
<dbReference type="PANTHER" id="PTHR23389">
    <property type="entry name" value="CHROMOSOME TRANSMISSION FIDELITY FACTOR 18"/>
    <property type="match status" value="1"/>
</dbReference>
<dbReference type="PANTHER" id="PTHR23389:SF9">
    <property type="entry name" value="DNA LIGASE"/>
    <property type="match status" value="1"/>
</dbReference>
<dbReference type="Pfam" id="PF00533">
    <property type="entry name" value="BRCT"/>
    <property type="match status" value="1"/>
</dbReference>
<dbReference type="Pfam" id="PF01653">
    <property type="entry name" value="DNA_ligase_aden"/>
    <property type="match status" value="1"/>
</dbReference>
<dbReference type="Pfam" id="PF03120">
    <property type="entry name" value="DNA_ligase_OB"/>
    <property type="match status" value="1"/>
</dbReference>
<dbReference type="Pfam" id="PF03119">
    <property type="entry name" value="DNA_ligase_ZBD"/>
    <property type="match status" value="1"/>
</dbReference>
<dbReference type="Pfam" id="PF12826">
    <property type="entry name" value="HHH_2"/>
    <property type="match status" value="1"/>
</dbReference>
<dbReference type="Pfam" id="PF14520">
    <property type="entry name" value="HHH_5"/>
    <property type="match status" value="1"/>
</dbReference>
<dbReference type="PIRSF" id="PIRSF001604">
    <property type="entry name" value="LigA"/>
    <property type="match status" value="1"/>
</dbReference>
<dbReference type="SMART" id="SM00292">
    <property type="entry name" value="BRCT"/>
    <property type="match status" value="1"/>
</dbReference>
<dbReference type="SMART" id="SM00278">
    <property type="entry name" value="HhH1"/>
    <property type="match status" value="3"/>
</dbReference>
<dbReference type="SMART" id="SM00532">
    <property type="entry name" value="LIGANc"/>
    <property type="match status" value="1"/>
</dbReference>
<dbReference type="SUPFAM" id="SSF52113">
    <property type="entry name" value="BRCT domain"/>
    <property type="match status" value="1"/>
</dbReference>
<dbReference type="SUPFAM" id="SSF56091">
    <property type="entry name" value="DNA ligase/mRNA capping enzyme, catalytic domain"/>
    <property type="match status" value="1"/>
</dbReference>
<dbReference type="SUPFAM" id="SSF50249">
    <property type="entry name" value="Nucleic acid-binding proteins"/>
    <property type="match status" value="1"/>
</dbReference>
<dbReference type="SUPFAM" id="SSF47781">
    <property type="entry name" value="RuvA domain 2-like"/>
    <property type="match status" value="1"/>
</dbReference>
<dbReference type="PROSITE" id="PS50172">
    <property type="entry name" value="BRCT"/>
    <property type="match status" value="1"/>
</dbReference>
<dbReference type="PROSITE" id="PS01056">
    <property type="entry name" value="DNA_LIGASE_N2"/>
    <property type="match status" value="1"/>
</dbReference>
<accession>Q46IA9</accession>
<comment type="function">
    <text evidence="1">DNA ligase that catalyzes the formation of phosphodiester linkages between 5'-phosphoryl and 3'-hydroxyl groups in double-stranded DNA using NAD as a coenzyme and as the energy source for the reaction. It is essential for DNA replication and repair of damaged DNA.</text>
</comment>
<comment type="catalytic activity">
    <reaction evidence="1">
        <text>NAD(+) + (deoxyribonucleotide)n-3'-hydroxyl + 5'-phospho-(deoxyribonucleotide)m = (deoxyribonucleotide)n+m + AMP + beta-nicotinamide D-nucleotide.</text>
        <dbReference type="EC" id="6.5.1.2"/>
    </reaction>
</comment>
<comment type="cofactor">
    <cofactor evidence="1">
        <name>Mg(2+)</name>
        <dbReference type="ChEBI" id="CHEBI:18420"/>
    </cofactor>
    <cofactor evidence="1">
        <name>Mn(2+)</name>
        <dbReference type="ChEBI" id="CHEBI:29035"/>
    </cofactor>
</comment>
<comment type="similarity">
    <text evidence="1">Belongs to the NAD-dependent DNA ligase family. LigA subfamily.</text>
</comment>
<reference key="1">
    <citation type="journal article" date="2007" name="PLoS Genet.">
        <title>Patterns and implications of gene gain and loss in the evolution of Prochlorococcus.</title>
        <authorList>
            <person name="Kettler G.C."/>
            <person name="Martiny A.C."/>
            <person name="Huang K."/>
            <person name="Zucker J."/>
            <person name="Coleman M.L."/>
            <person name="Rodrigue S."/>
            <person name="Chen F."/>
            <person name="Lapidus A."/>
            <person name="Ferriera S."/>
            <person name="Johnson J."/>
            <person name="Steglich C."/>
            <person name="Church G.M."/>
            <person name="Richardson P."/>
            <person name="Chisholm S.W."/>
        </authorList>
    </citation>
    <scope>NUCLEOTIDE SEQUENCE [LARGE SCALE GENOMIC DNA]</scope>
    <source>
        <strain>NATL2A</strain>
    </source>
</reference>
<organism>
    <name type="scientific">Prochlorococcus marinus (strain NATL2A)</name>
    <dbReference type="NCBI Taxonomy" id="59920"/>
    <lineage>
        <taxon>Bacteria</taxon>
        <taxon>Bacillati</taxon>
        <taxon>Cyanobacteriota</taxon>
        <taxon>Cyanophyceae</taxon>
        <taxon>Synechococcales</taxon>
        <taxon>Prochlorococcaceae</taxon>
        <taxon>Prochlorococcus</taxon>
    </lineage>
</organism>
<name>DNLJ_PROMT</name>
<sequence>MNSNFNQHFERIKELRALLNKANYSYYVLDSPEIDDSVYDQLYRELIEIENIHPSLITDDSPSQRLGGVPSKGFKNVEHNIPLLSLDNAFNLNEVEAWYGRISKLISSENKNIKKVYDPELICELKIDGNAISLRYENGILTRATTRGDGKTGEDITTNIRTISTIPLRLLLENPPLWVEIRGEAFMPNNIFNKLNIERKNNDQPLFANPRNSCAGTLRQLDPKIVASRKLDFFAYSLYFPENWEPTDNNFKKPISQSESLEFLKNIGFKVNTTYETTKTLNEANKYYKYWEVKKDFLAYATDGIVVKIDKFEIQNLLGATNKAPRWAIAVKYPAEEKATKLRKIIFQVGRSGAVTPVAEFESIELAGTSVNRATLHNAKRLASLDLHYEDTIIVRKAGEIIPEVIRVIKEFRKVDAKLVQLPQNCPECNSKLILESNEAITKCINYRCAAKLKGLLRHWVSKGSMNIDGLGEKIINQLVNEGYVKSIADLYKLEIDSLLELERFGEKSANNLLIEINESKNKNWHKQLYGLGIPHIGEANAKSLSNNFNSIEELNAIAKESPEKISNIYGFGNEMKDAIVKWFDDSNNQTLIKELKAIGFSLKESLDSNYNSNQSNVFDGKSFVLTGTLDSLTRDEAKELIESAGGKVSSSISKKTDFLVSGEKAGSKLNKAQELGVKIINENELKLLL</sequence>
<gene>
    <name evidence="1" type="primary">ligA</name>
    <name type="ordered locus">PMN2A_1279</name>
</gene>
<feature type="chain" id="PRO_0000313368" description="DNA ligase">
    <location>
        <begin position="1"/>
        <end position="690"/>
    </location>
</feature>
<feature type="domain" description="BRCT" evidence="1">
    <location>
        <begin position="614"/>
        <end position="690"/>
    </location>
</feature>
<feature type="active site" description="N6-AMP-lysine intermediate" evidence="1">
    <location>
        <position position="126"/>
    </location>
</feature>
<feature type="binding site" evidence="1">
    <location>
        <begin position="36"/>
        <end position="40"/>
    </location>
    <ligand>
        <name>NAD(+)</name>
        <dbReference type="ChEBI" id="CHEBI:57540"/>
    </ligand>
</feature>
<feature type="binding site" evidence="1">
    <location>
        <begin position="85"/>
        <end position="86"/>
    </location>
    <ligand>
        <name>NAD(+)</name>
        <dbReference type="ChEBI" id="CHEBI:57540"/>
    </ligand>
</feature>
<feature type="binding site" evidence="1">
    <location>
        <position position="124"/>
    </location>
    <ligand>
        <name>NAD(+)</name>
        <dbReference type="ChEBI" id="CHEBI:57540"/>
    </ligand>
</feature>
<feature type="binding site" evidence="1">
    <location>
        <position position="147"/>
    </location>
    <ligand>
        <name>NAD(+)</name>
        <dbReference type="ChEBI" id="CHEBI:57540"/>
    </ligand>
</feature>
<feature type="binding site" evidence="1">
    <location>
        <position position="184"/>
    </location>
    <ligand>
        <name>NAD(+)</name>
        <dbReference type="ChEBI" id="CHEBI:57540"/>
    </ligand>
</feature>
<feature type="binding site" evidence="1">
    <location>
        <position position="308"/>
    </location>
    <ligand>
        <name>NAD(+)</name>
        <dbReference type="ChEBI" id="CHEBI:57540"/>
    </ligand>
</feature>
<feature type="binding site" evidence="1">
    <location>
        <position position="332"/>
    </location>
    <ligand>
        <name>NAD(+)</name>
        <dbReference type="ChEBI" id="CHEBI:57540"/>
    </ligand>
</feature>
<feature type="binding site" evidence="1">
    <location>
        <position position="426"/>
    </location>
    <ligand>
        <name>Zn(2+)</name>
        <dbReference type="ChEBI" id="CHEBI:29105"/>
    </ligand>
</feature>
<feature type="binding site" evidence="1">
    <location>
        <position position="429"/>
    </location>
    <ligand>
        <name>Zn(2+)</name>
        <dbReference type="ChEBI" id="CHEBI:29105"/>
    </ligand>
</feature>
<feature type="binding site" evidence="1">
    <location>
        <position position="444"/>
    </location>
    <ligand>
        <name>Zn(2+)</name>
        <dbReference type="ChEBI" id="CHEBI:29105"/>
    </ligand>
</feature>
<feature type="binding site" evidence="1">
    <location>
        <position position="449"/>
    </location>
    <ligand>
        <name>Zn(2+)</name>
        <dbReference type="ChEBI" id="CHEBI:29105"/>
    </ligand>
</feature>